<evidence type="ECO:0000255" key="1">
    <source>
        <dbReference type="HAMAP-Rule" id="MF_01384"/>
    </source>
</evidence>
<keyword id="KW-0143">Chaperone</keyword>
<keyword id="KW-0963">Cytoplasm</keyword>
<keyword id="KW-0996">Nickel insertion</keyword>
<keyword id="KW-1185">Reference proteome</keyword>
<reference key="1">
    <citation type="journal article" date="2007" name="Science">
        <title>Legumes symbioses: absence of nod genes in photosynthetic bradyrhizobia.</title>
        <authorList>
            <person name="Giraud E."/>
            <person name="Moulin L."/>
            <person name="Vallenet D."/>
            <person name="Barbe V."/>
            <person name="Cytryn E."/>
            <person name="Avarre J.-C."/>
            <person name="Jaubert M."/>
            <person name="Simon D."/>
            <person name="Cartieaux F."/>
            <person name="Prin Y."/>
            <person name="Bena G."/>
            <person name="Hannibal L."/>
            <person name="Fardoux J."/>
            <person name="Kojadinovic M."/>
            <person name="Vuillet L."/>
            <person name="Lajus A."/>
            <person name="Cruveiller S."/>
            <person name="Rouy Z."/>
            <person name="Mangenot S."/>
            <person name="Segurens B."/>
            <person name="Dossat C."/>
            <person name="Franck W.L."/>
            <person name="Chang W.-S."/>
            <person name="Saunders E."/>
            <person name="Bruce D."/>
            <person name="Richardson P."/>
            <person name="Normand P."/>
            <person name="Dreyfus B."/>
            <person name="Pignol D."/>
            <person name="Stacey G."/>
            <person name="Emerich D."/>
            <person name="Vermeglio A."/>
            <person name="Medigue C."/>
            <person name="Sadowsky M."/>
        </authorList>
    </citation>
    <scope>NUCLEOTIDE SEQUENCE [LARGE SCALE GENOMIC DNA]</scope>
    <source>
        <strain>BTAi1 / ATCC BAA-1182</strain>
    </source>
</reference>
<sequence length="286" mass="30812">MSASAPEPPRLDLSFVRRGGRTVIDRRLFAWPFVLTRSFHTDGARPDLLSVILQTGSGAVHGEDRLTQRFTLREGAAVSVTTQGATSVHRAEPGARAVEQVQLRVAAGASLDYRPEPRILFPDAALCQVLELDCAADAVALVTDAFTMHDPDGQGRLFRELDSTVIVRRPSQEPLLIDRMQLCDPGTALFKGRRAFGSAVLMLPDMHDRAAIRLRVIDTLAHIDDLYAAASLLPQSVGIGIRLAARELRQLRAGFDAVAALVREIDLGARAAQAPSAAATARPTAA</sequence>
<gene>
    <name evidence="1" type="primary">ureD2</name>
    <name type="ordered locus">BBta_4440</name>
</gene>
<comment type="function">
    <text evidence="1">Required for maturation of urease via the functional incorporation of the urease nickel metallocenter.</text>
</comment>
<comment type="subunit">
    <text evidence="1">UreD, UreF and UreG form a complex that acts as a GTP-hydrolysis-dependent molecular chaperone, activating the urease apoprotein by helping to assemble the nickel containing metallocenter of UreC. The UreE protein probably delivers the nickel.</text>
</comment>
<comment type="subcellular location">
    <subcellularLocation>
        <location evidence="1">Cytoplasm</location>
    </subcellularLocation>
</comment>
<comment type="similarity">
    <text evidence="1">Belongs to the UreD family.</text>
</comment>
<feature type="chain" id="PRO_0000346555" description="Urease accessory protein UreD 2">
    <location>
        <begin position="1"/>
        <end position="286"/>
    </location>
</feature>
<proteinExistence type="inferred from homology"/>
<protein>
    <recommendedName>
        <fullName evidence="1">Urease accessory protein UreD 2</fullName>
    </recommendedName>
</protein>
<name>URED2_BRASB</name>
<dbReference type="EMBL" id="CP000494">
    <property type="protein sequence ID" value="ABQ36476.1"/>
    <property type="molecule type" value="Genomic_DNA"/>
</dbReference>
<dbReference type="RefSeq" id="WP_012044472.1">
    <property type="nucleotide sequence ID" value="NC_009485.1"/>
</dbReference>
<dbReference type="SMR" id="A5EJY2"/>
<dbReference type="STRING" id="288000.BBta_4440"/>
<dbReference type="KEGG" id="bbt:BBta_4440"/>
<dbReference type="eggNOG" id="COG0829">
    <property type="taxonomic scope" value="Bacteria"/>
</dbReference>
<dbReference type="HOGENOM" id="CLU_056339_1_1_5"/>
<dbReference type="OrthoDB" id="9807968at2"/>
<dbReference type="Proteomes" id="UP000000246">
    <property type="component" value="Chromosome"/>
</dbReference>
<dbReference type="GO" id="GO:0005737">
    <property type="term" value="C:cytoplasm"/>
    <property type="evidence" value="ECO:0007669"/>
    <property type="project" value="UniProtKB-SubCell"/>
</dbReference>
<dbReference type="GO" id="GO:0016151">
    <property type="term" value="F:nickel cation binding"/>
    <property type="evidence" value="ECO:0007669"/>
    <property type="project" value="UniProtKB-UniRule"/>
</dbReference>
<dbReference type="HAMAP" id="MF_01384">
    <property type="entry name" value="UreD"/>
    <property type="match status" value="1"/>
</dbReference>
<dbReference type="InterPro" id="IPR002669">
    <property type="entry name" value="UreD"/>
</dbReference>
<dbReference type="PANTHER" id="PTHR33643">
    <property type="entry name" value="UREASE ACCESSORY PROTEIN D"/>
    <property type="match status" value="1"/>
</dbReference>
<dbReference type="PANTHER" id="PTHR33643:SF1">
    <property type="entry name" value="UREASE ACCESSORY PROTEIN D"/>
    <property type="match status" value="1"/>
</dbReference>
<dbReference type="Pfam" id="PF01774">
    <property type="entry name" value="UreD"/>
    <property type="match status" value="1"/>
</dbReference>
<accession>A5EJY2</accession>
<organism>
    <name type="scientific">Bradyrhizobium sp. (strain BTAi1 / ATCC BAA-1182)</name>
    <dbReference type="NCBI Taxonomy" id="288000"/>
    <lineage>
        <taxon>Bacteria</taxon>
        <taxon>Pseudomonadati</taxon>
        <taxon>Pseudomonadota</taxon>
        <taxon>Alphaproteobacteria</taxon>
        <taxon>Hyphomicrobiales</taxon>
        <taxon>Nitrobacteraceae</taxon>
        <taxon>Bradyrhizobium</taxon>
    </lineage>
</organism>